<sequence length="146" mass="16279">MKFLVLAVLLTVGAAQEGISSRALWQFRSMIKCAIPGSHPLMDFNNYGCYCGLGGSGTPVDELDRCCETHDNCYRDAKNLDSCKFLVDNPYTESYSYSCSNTEITCNSKNNACEAFICNCDRNAAICFSKAPYNKEHKNLDTKKYC</sequence>
<gene>
    <name type="primary">PLA2G1B</name>
</gene>
<protein>
    <recommendedName>
        <fullName>Phospholipase A2, major isoenzyme</fullName>
        <ecNumber evidence="7">3.1.1.4</ecNumber>
    </recommendedName>
    <alternativeName>
        <fullName>Group IB phospholipase A2</fullName>
    </alternativeName>
    <alternativeName>
        <fullName>Phosphatidylcholine 2-acylhydrolase 1B</fullName>
    </alternativeName>
</protein>
<reference key="1">
    <citation type="journal article" date="1987" name="Nucleic Acids Res.">
        <title>Expression of porcine pancreatic phospholipase A2. Generation of active enzyme by sequence-specific cleavage of a hybrid protein from Escherichia coli.</title>
        <authorList>
            <person name="de Geus P."/>
            <person name="van den Bergh C.J."/>
            <person name="Kuipers O."/>
            <person name="Verheij H.M."/>
            <person name="Hoekstra W.P.M."/>
            <person name="de Haas G.H."/>
        </authorList>
    </citation>
    <scope>NUCLEOTIDE SEQUENCE [MRNA]</scope>
    <source>
        <tissue>Pancreas</tissue>
    </source>
</reference>
<reference key="2">
    <citation type="journal article" date="1986" name="DNA">
        <title>Pancreatic phospholipase A2: isolation of the human gene and cDNAs from porcine pancreas and human lung.</title>
        <authorList>
            <person name="Seilhamer J.J."/>
            <person name="Randall T.L."/>
            <person name="Yamanaka M."/>
            <person name="Johnson L.K."/>
        </authorList>
    </citation>
    <scope>NUCLEOTIDE SEQUENCE [MRNA]</scope>
    <source>
        <tissue>Pancreas</tissue>
    </source>
</reference>
<reference key="3">
    <citation type="journal article" date="1970" name="Biochim. Biophys. Acta">
        <title>Studies on phospholipase A and its zymogen from porcine pancreas. I. The complete amino acid sequence.</title>
        <authorList>
            <person name="de Haas G.H."/>
            <person name="Slotboom A.J."/>
            <person name="Bonsen P.P.M."/>
            <person name="van Deenen L.L.M."/>
            <person name="Maroux S."/>
            <person name="Puigserver A."/>
            <person name="Desnuelle P."/>
        </authorList>
    </citation>
    <scope>PROTEIN SEQUENCE OF 16-146</scope>
    <scope>PYROGLUTAMATE FORMATION AT GLN-16</scope>
</reference>
<reference key="4">
    <citation type="journal article" date="1977" name="Biochim. Biophys. Acta">
        <title>The primary structure of phospholipase A2 from porcine pancreas. A reinvestigation.</title>
        <authorList>
            <person name="Puijk W.C."/>
            <person name="Verheij H.M."/>
            <person name="de Haas G.H."/>
        </authorList>
    </citation>
    <scope>SEQUENCE REVISION</scope>
</reference>
<reference key="5">
    <citation type="journal article" date="1970" name="Biochim. Biophys. Acta">
        <title>Studies on phospholipase A and its zymogen from porcine pancreas. II. The assignment of the position of the six disulfide bridges.</title>
        <authorList>
            <person name="de Haas G.H."/>
            <person name="Slotboom A.J."/>
            <person name="Bonsen P.P.M."/>
            <person name="Nieuwenhuizen W."/>
            <person name="van Deenen L.L.M."/>
            <person name="Maroux S."/>
            <person name="Dlouha V."/>
            <person name="Desnuelle P."/>
        </authorList>
    </citation>
    <scope>DISULFIDE BONDS</scope>
</reference>
<reference key="6">
    <citation type="journal article" date="1989" name="J. Biol. Chem.">
        <title>Dimerization and activation of porcine pancreatic phospholipase A2 via substrate level acylation of lysine 56.</title>
        <authorList>
            <person name="Tomasselli A.G."/>
            <person name="Hui J."/>
            <person name="Fisher J."/>
            <person name="Zuercher-Neely H."/>
            <person name="Reardon H.M."/>
            <person name="Oriaku E."/>
            <person name="Kezdy F.J."/>
            <person name="Heinrikson R.L."/>
        </authorList>
    </citation>
    <scope>PALMITOYLATION AT LYS-78</scope>
    <source>
        <tissue>Pancreas</tissue>
    </source>
</reference>
<reference key="7">
    <citation type="journal article" date="2007" name="Biochim. Biophys. Acta">
        <title>Role of 57-72 loop in the allosteric action of bile salts on pancreatic IB phospholipase A(2): regulation of fat and cholesterol homeostasis.</title>
        <authorList>
            <person name="Yu B.Z."/>
            <person name="Apitz-Castro R.J."/>
            <person name="Jain M.K."/>
            <person name="Berg O.G."/>
        </authorList>
    </citation>
    <scope>FUNCTION</scope>
    <scope>CATALYTIC ACTIVITY</scope>
    <scope>ACTIVITY REGULATION</scope>
    <scope>MUTAGENESIS OF 62-GLU--CYS-66</scope>
</reference>
<reference key="8">
    <citation type="journal article" date="1983" name="J. Mol. Biol.">
        <title>Structure of porcine pancreatic phospholipase A2 at 2.6-A resolution and comparison with bovine phospholipase A2.</title>
        <authorList>
            <person name="Dijkstra B.W."/>
            <person name="Renetseder R."/>
            <person name="Kalk K.H."/>
            <person name="Hol W.G.J."/>
            <person name="Drenth J."/>
        </authorList>
    </citation>
    <scope>X-RAY CRYSTALLOGRAPHY (2.6 ANGSTROMS)</scope>
    <scope>ACTIVE SITE</scope>
    <scope>BINDING SITES</scope>
</reference>
<reference key="9">
    <citation type="journal article" date="1990" name="J. Mol. Biol.">
        <title>Structure of an engineered porcine phospholipase A2 with enhanced activity at 2.1-A resolution. Comparison with the wild-type porcine and Crotalus atrox phospholipase A2.</title>
        <authorList>
            <person name="Thunnissen M.M.G.M."/>
            <person name="Kalk K.H."/>
            <person name="Drenth J."/>
            <person name="Dijkstra B.W."/>
        </authorList>
    </citation>
    <scope>X-RAY CRYSTALLOGRAPHY (2.1 ANGSTROMS)</scope>
</reference>
<reference key="10">
    <citation type="journal article" date="1990" name="Nature">
        <title>X-ray structure of phospholipase A2 complexed with a substrate-derived inhibitor.</title>
        <authorList>
            <person name="Thunnissen M.M.G.M."/>
            <person name="Ab E."/>
            <person name="Kalk K.H."/>
            <person name="Drenth J."/>
            <person name="Dijkstra B.W."/>
            <person name="Kuipers O.P."/>
            <person name="Dijkman R."/>
            <person name="de Haas G.H."/>
            <person name="Verheij H.M."/>
        </authorList>
    </citation>
    <scope>X-RAY CRYSTALLOGRAPHY (2.4 ANGSTROMS)</scope>
</reference>
<reference key="11">
    <citation type="journal article" date="1991" name="Biochemistry">
        <title>Porcine pancreatic phospholipase A2: sequence-specific 1H and 15N NMR assignments and secondary structure.</title>
        <authorList>
            <person name="Dekker N."/>
            <person name="Peters A.R."/>
            <person name="Slotboom A.J."/>
            <person name="Boelens R."/>
            <person name="Kaptein R."/>
            <person name="de Haas G.H."/>
        </authorList>
    </citation>
    <scope>STRUCTURE BY NMR</scope>
</reference>
<reference key="12">
    <citation type="journal article" date="1995" name="Nat. Struct. Biol.">
        <title>NMR structures of phospholipase A2 reveal conformational changes during interfacial activation.</title>
        <authorList>
            <person name="van den Berg B."/>
            <person name="Tessari M."/>
            <person name="Boelens R."/>
            <person name="Dijkman R."/>
            <person name="de Haas G.H."/>
            <person name="Kaptein R."/>
            <person name="Verheij H.M."/>
        </authorList>
    </citation>
    <scope>STRUCTURE BY NMR</scope>
</reference>
<reference key="13">
    <citation type="journal article" date="1995" name="EMBO J.">
        <title>Solution structure of porcine pancreatic phospholipase A2.</title>
        <authorList>
            <person name="van den Berg B."/>
            <person name="Tessari M."/>
            <person name="de Haas G.H."/>
            <person name="Verheij H.M."/>
            <person name="Boelens R."/>
            <person name="Kaptein R."/>
        </authorList>
    </citation>
    <scope>STRUCTURE BY NMR</scope>
</reference>
<reference key="14">
    <citation type="journal article" date="1995" name="J. Biomol. NMR">
        <title>Solution structure of porcine pancreatic phospholipase A2 complexed with micelles and a competitive inhibitor.</title>
        <authorList>
            <person name="van den Berg B."/>
            <person name="Tessari M."/>
            <person name="Boelens R."/>
            <person name="Dijkman R."/>
            <person name="Kaptein R."/>
            <person name="de Haas G.H."/>
            <person name="Verheij H.M."/>
        </authorList>
    </citation>
    <scope>STRUCTURE BY NMR</scope>
</reference>
<organism>
    <name type="scientific">Sus scrofa</name>
    <name type="common">Pig</name>
    <dbReference type="NCBI Taxonomy" id="9823"/>
    <lineage>
        <taxon>Eukaryota</taxon>
        <taxon>Metazoa</taxon>
        <taxon>Chordata</taxon>
        <taxon>Craniata</taxon>
        <taxon>Vertebrata</taxon>
        <taxon>Euteleostomi</taxon>
        <taxon>Mammalia</taxon>
        <taxon>Eutheria</taxon>
        <taxon>Laurasiatheria</taxon>
        <taxon>Artiodactyla</taxon>
        <taxon>Suina</taxon>
        <taxon>Suidae</taxon>
        <taxon>Sus</taxon>
    </lineage>
</organism>
<feature type="signal peptide" evidence="10">
    <location>
        <begin position="1"/>
        <end position="15"/>
    </location>
</feature>
<feature type="propeptide" id="PRO_0000022743" description="Activation peptide">
    <location>
        <begin position="16"/>
        <end position="22"/>
    </location>
</feature>
<feature type="chain" id="PRO_0000022744" description="Phospholipase A2, major isoenzyme">
    <location>
        <begin position="23"/>
        <end position="146"/>
    </location>
</feature>
<feature type="active site" evidence="11">
    <location>
        <position position="70"/>
    </location>
</feature>
<feature type="active site" evidence="11">
    <location>
        <position position="121"/>
    </location>
</feature>
<feature type="binding site" evidence="1">
    <location>
        <position position="50"/>
    </location>
    <ligand>
        <name>Ca(2+)</name>
        <dbReference type="ChEBI" id="CHEBI:29108"/>
    </ligand>
</feature>
<feature type="binding site" evidence="1">
    <location>
        <position position="52"/>
    </location>
    <ligand>
        <name>Ca(2+)</name>
        <dbReference type="ChEBI" id="CHEBI:29108"/>
    </ligand>
</feature>
<feature type="binding site" evidence="1">
    <location>
        <position position="54"/>
    </location>
    <ligand>
        <name>Ca(2+)</name>
        <dbReference type="ChEBI" id="CHEBI:29108"/>
    </ligand>
</feature>
<feature type="binding site" evidence="1">
    <location>
        <position position="71"/>
    </location>
    <ligand>
        <name>Ca(2+)</name>
        <dbReference type="ChEBI" id="CHEBI:29108"/>
    </ligand>
</feature>
<feature type="modified residue" description="Pyrrolidone carboxylic acid" evidence="10">
    <location>
        <position position="16"/>
    </location>
</feature>
<feature type="lipid moiety-binding region" description="N6-palmitoyl lysine" evidence="8">
    <location>
        <position position="78"/>
    </location>
</feature>
<feature type="disulfide bond" evidence="9">
    <location>
        <begin position="33"/>
        <end position="99"/>
    </location>
</feature>
<feature type="disulfide bond" evidence="9">
    <location>
        <begin position="49"/>
        <end position="146"/>
    </location>
</feature>
<feature type="disulfide bond" evidence="9">
    <location>
        <begin position="51"/>
        <end position="67"/>
    </location>
</feature>
<feature type="disulfide bond" evidence="9">
    <location>
        <begin position="66"/>
        <end position="127"/>
    </location>
</feature>
<feature type="disulfide bond" evidence="9">
    <location>
        <begin position="73"/>
        <end position="120"/>
    </location>
</feature>
<feature type="disulfide bond" evidence="9">
    <location>
        <begin position="83"/>
        <end position="113"/>
    </location>
</feature>
<feature type="disulfide bond" evidence="9">
    <location>
        <begin position="106"/>
        <end position="118"/>
    </location>
</feature>
<feature type="mutagenesis site" description="Impairs the hydrolysis rate-lowering effect of taurochenodeoxycholate." evidence="7">
    <location>
        <begin position="62"/>
        <end position="66"/>
    </location>
</feature>
<feature type="helix" evidence="14">
    <location>
        <begin position="21"/>
        <end position="34"/>
    </location>
</feature>
<feature type="strand" evidence="16">
    <location>
        <begin position="35"/>
        <end position="37"/>
    </location>
</feature>
<feature type="helix" evidence="14">
    <location>
        <begin position="40"/>
        <end position="44"/>
    </location>
</feature>
<feature type="strand" evidence="13">
    <location>
        <begin position="45"/>
        <end position="47"/>
    </location>
</feature>
<feature type="turn" evidence="14">
    <location>
        <begin position="48"/>
        <end position="50"/>
    </location>
</feature>
<feature type="strand" evidence="14">
    <location>
        <begin position="51"/>
        <end position="54"/>
    </location>
</feature>
<feature type="helix" evidence="14">
    <location>
        <begin position="62"/>
        <end position="78"/>
    </location>
</feature>
<feature type="helix" evidence="14">
    <location>
        <begin position="81"/>
        <end position="87"/>
    </location>
</feature>
<feature type="helix" evidence="14">
    <location>
        <begin position="90"/>
        <end position="92"/>
    </location>
</feature>
<feature type="strand" evidence="14">
    <location>
        <begin position="97"/>
        <end position="100"/>
    </location>
</feature>
<feature type="strand" evidence="14">
    <location>
        <begin position="103"/>
        <end position="106"/>
    </location>
</feature>
<feature type="strand" evidence="15">
    <location>
        <begin position="108"/>
        <end position="110"/>
    </location>
</feature>
<feature type="helix" evidence="14">
    <location>
        <begin position="112"/>
        <end position="130"/>
    </location>
</feature>
<feature type="helix" evidence="14">
    <location>
        <begin position="135"/>
        <end position="137"/>
    </location>
</feature>
<feature type="helix" evidence="14">
    <location>
        <begin position="142"/>
        <end position="145"/>
    </location>
</feature>
<dbReference type="EC" id="3.1.1.4" evidence="7"/>
<dbReference type="EMBL" id="Y00146">
    <property type="protein sequence ID" value="CAA68341.1"/>
    <property type="molecule type" value="mRNA"/>
</dbReference>
<dbReference type="EMBL" id="M21055">
    <property type="protein sequence ID" value="AAA31101.1"/>
    <property type="molecule type" value="mRNA"/>
</dbReference>
<dbReference type="PIR" id="B25793">
    <property type="entry name" value="PSPGA"/>
</dbReference>
<dbReference type="RefSeq" id="NP_001004037.1">
    <property type="nucleotide sequence ID" value="NM_001004037.1"/>
</dbReference>
<dbReference type="PDB" id="1FX9">
    <property type="method" value="X-ray"/>
    <property type="resolution" value="2.00 A"/>
    <property type="chains" value="A/B=23-146"/>
</dbReference>
<dbReference type="PDB" id="1FXF">
    <property type="method" value="X-ray"/>
    <property type="resolution" value="1.85 A"/>
    <property type="chains" value="A/B=23-146"/>
</dbReference>
<dbReference type="PDB" id="1HN4">
    <property type="method" value="X-ray"/>
    <property type="resolution" value="1.50 A"/>
    <property type="chains" value="A/B=16-146"/>
</dbReference>
<dbReference type="PDB" id="1L8S">
    <property type="method" value="X-ray"/>
    <property type="resolution" value="1.55 A"/>
    <property type="chains" value="A/B=23-146"/>
</dbReference>
<dbReference type="PDB" id="1P2P">
    <property type="method" value="X-ray"/>
    <property type="resolution" value="2.60 A"/>
    <property type="chains" value="A=23-146"/>
</dbReference>
<dbReference type="PDB" id="1PIR">
    <property type="method" value="NMR"/>
    <property type="chains" value="A=23-146"/>
</dbReference>
<dbReference type="PDB" id="1PIS">
    <property type="method" value="NMR"/>
    <property type="chains" value="A=23-146"/>
</dbReference>
<dbReference type="PDB" id="1SFV">
    <property type="method" value="NMR"/>
    <property type="chains" value="A=23-146"/>
</dbReference>
<dbReference type="PDB" id="1SFW">
    <property type="method" value="NMR"/>
    <property type="chains" value="A=23-146"/>
</dbReference>
<dbReference type="PDB" id="1Y6O">
    <property type="method" value="X-ray"/>
    <property type="resolution" value="2.00 A"/>
    <property type="chains" value="A/B=23-146"/>
</dbReference>
<dbReference type="PDB" id="1Y6P">
    <property type="method" value="X-ray"/>
    <property type="resolution" value="2.25 A"/>
    <property type="chains" value="A/B=23-146"/>
</dbReference>
<dbReference type="PDB" id="2AZY">
    <property type="method" value="X-ray"/>
    <property type="resolution" value="1.90 A"/>
    <property type="chains" value="A=23-146"/>
</dbReference>
<dbReference type="PDB" id="2AZZ">
    <property type="method" value="X-ray"/>
    <property type="resolution" value="2.20 A"/>
    <property type="chains" value="A=23-146"/>
</dbReference>
<dbReference type="PDB" id="2B00">
    <property type="method" value="X-ray"/>
    <property type="resolution" value="1.85 A"/>
    <property type="chains" value="A=23-146"/>
</dbReference>
<dbReference type="PDB" id="2B01">
    <property type="method" value="X-ray"/>
    <property type="resolution" value="2.20 A"/>
    <property type="chains" value="A=23-146"/>
</dbReference>
<dbReference type="PDB" id="2B03">
    <property type="method" value="X-ray"/>
    <property type="resolution" value="2.30 A"/>
    <property type="chains" value="A=23-146"/>
</dbReference>
<dbReference type="PDB" id="2B04">
    <property type="method" value="X-ray"/>
    <property type="resolution" value="2.50 A"/>
    <property type="chains" value="A=23-146"/>
</dbReference>
<dbReference type="PDB" id="2PHI">
    <property type="method" value="X-ray"/>
    <property type="resolution" value="2.20 A"/>
    <property type="chains" value="A/B=23-146"/>
</dbReference>
<dbReference type="PDB" id="3FVI">
    <property type="method" value="X-ray"/>
    <property type="resolution" value="2.70 A"/>
    <property type="chains" value="A/B/C/D=23-146"/>
</dbReference>
<dbReference type="PDB" id="3FVJ">
    <property type="method" value="X-ray"/>
    <property type="resolution" value="2.30 A"/>
    <property type="chains" value="A=23-146"/>
</dbReference>
<dbReference type="PDB" id="3HSW">
    <property type="method" value="X-ray"/>
    <property type="resolution" value="2.50 A"/>
    <property type="chains" value="A=23-146"/>
</dbReference>
<dbReference type="PDB" id="3L30">
    <property type="method" value="X-ray"/>
    <property type="resolution" value="2.40 A"/>
    <property type="chains" value="A=23-146"/>
</dbReference>
<dbReference type="PDB" id="3O4M">
    <property type="method" value="X-ray"/>
    <property type="resolution" value="2.50 A"/>
    <property type="chains" value="A=23-146"/>
</dbReference>
<dbReference type="PDB" id="3P2P">
    <property type="method" value="X-ray"/>
    <property type="resolution" value="2.10 A"/>
    <property type="chains" value="A/B=23-146"/>
</dbReference>
<dbReference type="PDB" id="3QLM">
    <property type="method" value="X-ray"/>
    <property type="resolution" value="2.50 A"/>
    <property type="chains" value="A=23-146"/>
</dbReference>
<dbReference type="PDB" id="4DBK">
    <property type="method" value="X-ray"/>
    <property type="resolution" value="2.30 A"/>
    <property type="chains" value="A=23-146"/>
</dbReference>
<dbReference type="PDB" id="4G5I">
    <property type="method" value="X-ray"/>
    <property type="resolution" value="2.40 A"/>
    <property type="chains" value="A=23-146"/>
</dbReference>
<dbReference type="PDB" id="4O1Y">
    <property type="method" value="X-ray"/>
    <property type="resolution" value="2.50 A"/>
    <property type="chains" value="A=23-146"/>
</dbReference>
<dbReference type="PDB" id="4P2P">
    <property type="method" value="X-ray"/>
    <property type="resolution" value="2.40 A"/>
    <property type="chains" value="A=23-146"/>
</dbReference>
<dbReference type="PDB" id="5P2P">
    <property type="method" value="X-ray"/>
    <property type="resolution" value="2.40 A"/>
    <property type="chains" value="A/B=23-146"/>
</dbReference>
<dbReference type="PDBsum" id="1FX9"/>
<dbReference type="PDBsum" id="1FXF"/>
<dbReference type="PDBsum" id="1HN4"/>
<dbReference type="PDBsum" id="1L8S"/>
<dbReference type="PDBsum" id="1P2P"/>
<dbReference type="PDBsum" id="1PIR"/>
<dbReference type="PDBsum" id="1PIS"/>
<dbReference type="PDBsum" id="1SFV"/>
<dbReference type="PDBsum" id="1SFW"/>
<dbReference type="PDBsum" id="1Y6O"/>
<dbReference type="PDBsum" id="1Y6P"/>
<dbReference type="PDBsum" id="2AZY"/>
<dbReference type="PDBsum" id="2AZZ"/>
<dbReference type="PDBsum" id="2B00"/>
<dbReference type="PDBsum" id="2B01"/>
<dbReference type="PDBsum" id="2B03"/>
<dbReference type="PDBsum" id="2B04"/>
<dbReference type="PDBsum" id="2PHI"/>
<dbReference type="PDBsum" id="3FVI"/>
<dbReference type="PDBsum" id="3FVJ"/>
<dbReference type="PDBsum" id="3HSW"/>
<dbReference type="PDBsum" id="3L30"/>
<dbReference type="PDBsum" id="3O4M"/>
<dbReference type="PDBsum" id="3P2P"/>
<dbReference type="PDBsum" id="3QLM"/>
<dbReference type="PDBsum" id="4DBK"/>
<dbReference type="PDBsum" id="4G5I"/>
<dbReference type="PDBsum" id="4O1Y"/>
<dbReference type="PDBsum" id="4P2P"/>
<dbReference type="PDBsum" id="5P2P"/>
<dbReference type="BMRB" id="P00592"/>
<dbReference type="SMR" id="P00592"/>
<dbReference type="FunCoup" id="P00592">
    <property type="interactions" value="641"/>
</dbReference>
<dbReference type="STRING" id="9823.ENSSSCP00000072242"/>
<dbReference type="BindingDB" id="P00592"/>
<dbReference type="ChEMBL" id="CHEMBL4715"/>
<dbReference type="DrugCentral" id="P00592"/>
<dbReference type="SwissLipids" id="SLP:000001435"/>
<dbReference type="PaxDb" id="9823-ENSSSCP00000028002"/>
<dbReference type="Ensembl" id="ENSSSCT00035052384.1">
    <property type="protein sequence ID" value="ENSSSCP00035021070.1"/>
    <property type="gene ID" value="ENSSSCG00035039434.1"/>
</dbReference>
<dbReference type="Ensembl" id="ENSSSCT00045058963.1">
    <property type="protein sequence ID" value="ENSSSCP00045041273.1"/>
    <property type="gene ID" value="ENSSSCG00045034381.1"/>
</dbReference>
<dbReference type="Ensembl" id="ENSSSCT00055029475.1">
    <property type="protein sequence ID" value="ENSSSCP00055023471.1"/>
    <property type="gene ID" value="ENSSSCG00055014901.1"/>
</dbReference>
<dbReference type="Ensembl" id="ENSSSCT00110075775">
    <property type="protein sequence ID" value="ENSSSCP00110053446"/>
    <property type="gene ID" value="ENSSSCG00110039727"/>
</dbReference>
<dbReference type="Ensembl" id="ENSSSCT00115004609">
    <property type="protein sequence ID" value="ENSSSCP00115004256"/>
    <property type="gene ID" value="ENSSSCG00115002768"/>
</dbReference>
<dbReference type="Ensembl" id="ENSSSCT00130064017">
    <property type="protein sequence ID" value="ENSSSCP00130045857"/>
    <property type="gene ID" value="ENSSSCG00130032784"/>
</dbReference>
<dbReference type="GeneID" id="445525"/>
<dbReference type="KEGG" id="ssc:445525"/>
<dbReference type="CTD" id="5319"/>
<dbReference type="eggNOG" id="KOG4087">
    <property type="taxonomic scope" value="Eukaryota"/>
</dbReference>
<dbReference type="InParanoid" id="P00592"/>
<dbReference type="OrthoDB" id="5841574at2759"/>
<dbReference type="BRENDA" id="3.1.1.4">
    <property type="organism ID" value="6170"/>
</dbReference>
<dbReference type="SABIO-RK" id="P00592"/>
<dbReference type="EvolutionaryTrace" id="P00592"/>
<dbReference type="PRO" id="PR:P00592"/>
<dbReference type="Proteomes" id="UP000008227">
    <property type="component" value="Unplaced"/>
</dbReference>
<dbReference type="Proteomes" id="UP000314985">
    <property type="component" value="Unplaced"/>
</dbReference>
<dbReference type="Proteomes" id="UP000694570">
    <property type="component" value="Unplaced"/>
</dbReference>
<dbReference type="Proteomes" id="UP000694571">
    <property type="component" value="Unplaced"/>
</dbReference>
<dbReference type="Proteomes" id="UP000694720">
    <property type="component" value="Unplaced"/>
</dbReference>
<dbReference type="Proteomes" id="UP000694722">
    <property type="component" value="Unplaced"/>
</dbReference>
<dbReference type="Proteomes" id="UP000694723">
    <property type="component" value="Unplaced"/>
</dbReference>
<dbReference type="Proteomes" id="UP000694724">
    <property type="component" value="Unplaced"/>
</dbReference>
<dbReference type="Proteomes" id="UP000694725">
    <property type="component" value="Unplaced"/>
</dbReference>
<dbReference type="Proteomes" id="UP000694726">
    <property type="component" value="Unplaced"/>
</dbReference>
<dbReference type="Proteomes" id="UP000694727">
    <property type="component" value="Unplaced"/>
</dbReference>
<dbReference type="Proteomes" id="UP000694728">
    <property type="component" value="Unplaced"/>
</dbReference>
<dbReference type="GO" id="GO:0009986">
    <property type="term" value="C:cell surface"/>
    <property type="evidence" value="ECO:0000314"/>
    <property type="project" value="BHF-UCL"/>
</dbReference>
<dbReference type="GO" id="GO:0005576">
    <property type="term" value="C:extracellular region"/>
    <property type="evidence" value="ECO:0007669"/>
    <property type="project" value="UniProtKB-SubCell"/>
</dbReference>
<dbReference type="GO" id="GO:0032052">
    <property type="term" value="F:bile acid binding"/>
    <property type="evidence" value="ECO:0000314"/>
    <property type="project" value="UniProtKB"/>
</dbReference>
<dbReference type="GO" id="GO:0005509">
    <property type="term" value="F:calcium ion binding"/>
    <property type="evidence" value="ECO:0000318"/>
    <property type="project" value="GO_Central"/>
</dbReference>
<dbReference type="GO" id="GO:0047498">
    <property type="term" value="F:calcium-dependent phospholipase A2 activity"/>
    <property type="evidence" value="ECO:0000314"/>
    <property type="project" value="UniProtKB"/>
</dbReference>
<dbReference type="GO" id="GO:0004623">
    <property type="term" value="F:phospholipase A2 activity"/>
    <property type="evidence" value="ECO:0000314"/>
    <property type="project" value="BHF-UCL"/>
</dbReference>
<dbReference type="GO" id="GO:0005543">
    <property type="term" value="F:phospholipid binding"/>
    <property type="evidence" value="ECO:0000318"/>
    <property type="project" value="GO_Central"/>
</dbReference>
<dbReference type="GO" id="GO:0005102">
    <property type="term" value="F:signaling receptor binding"/>
    <property type="evidence" value="ECO:0000314"/>
    <property type="project" value="BHF-UCL"/>
</dbReference>
<dbReference type="GO" id="GO:0032869">
    <property type="term" value="P:cellular response to insulin stimulus"/>
    <property type="evidence" value="ECO:0000314"/>
    <property type="project" value="BHF-UCL"/>
</dbReference>
<dbReference type="GO" id="GO:0006633">
    <property type="term" value="P:fatty acid biosynthetic process"/>
    <property type="evidence" value="ECO:0000314"/>
    <property type="project" value="BHF-UCL"/>
</dbReference>
<dbReference type="GO" id="GO:0035556">
    <property type="term" value="P:intracellular signal transduction"/>
    <property type="evidence" value="ECO:0000314"/>
    <property type="project" value="BHF-UCL"/>
</dbReference>
<dbReference type="GO" id="GO:0019370">
    <property type="term" value="P:leukotriene biosynthetic process"/>
    <property type="evidence" value="ECO:0000314"/>
    <property type="project" value="BHF-UCL"/>
</dbReference>
<dbReference type="GO" id="GO:0016042">
    <property type="term" value="P:lipid catabolic process"/>
    <property type="evidence" value="ECO:0007669"/>
    <property type="project" value="InterPro"/>
</dbReference>
<dbReference type="GO" id="GO:0030593">
    <property type="term" value="P:neutrophil chemotaxis"/>
    <property type="evidence" value="ECO:0000314"/>
    <property type="project" value="BHF-UCL"/>
</dbReference>
<dbReference type="GO" id="GO:0002446">
    <property type="term" value="P:neutrophil mediated immunity"/>
    <property type="evidence" value="ECO:0000314"/>
    <property type="project" value="BHF-UCL"/>
</dbReference>
<dbReference type="GO" id="GO:0046470">
    <property type="term" value="P:phosphatidylcholine metabolic process"/>
    <property type="evidence" value="ECO:0000314"/>
    <property type="project" value="UniProtKB"/>
</dbReference>
<dbReference type="GO" id="GO:0046471">
    <property type="term" value="P:phosphatidylglycerol metabolic process"/>
    <property type="evidence" value="ECO:0000250"/>
    <property type="project" value="UniProtKB"/>
</dbReference>
<dbReference type="GO" id="GO:0010524">
    <property type="term" value="P:positive regulation of calcium ion transport into cytosol"/>
    <property type="evidence" value="ECO:0000314"/>
    <property type="project" value="BHF-UCL"/>
</dbReference>
<dbReference type="GO" id="GO:0008284">
    <property type="term" value="P:positive regulation of cell population proliferation"/>
    <property type="evidence" value="ECO:0000314"/>
    <property type="project" value="BHF-UCL"/>
</dbReference>
<dbReference type="GO" id="GO:0048146">
    <property type="term" value="P:positive regulation of fibroblast proliferation"/>
    <property type="evidence" value="ECO:0000314"/>
    <property type="project" value="BHF-UCL"/>
</dbReference>
<dbReference type="GO" id="GO:0050778">
    <property type="term" value="P:positive regulation of immune response"/>
    <property type="evidence" value="ECO:0000314"/>
    <property type="project" value="BHF-UCL"/>
</dbReference>
<dbReference type="GO" id="GO:0032757">
    <property type="term" value="P:positive regulation of interleukin-8 production"/>
    <property type="evidence" value="ECO:0000314"/>
    <property type="project" value="BHF-UCL"/>
</dbReference>
<dbReference type="GO" id="GO:0043410">
    <property type="term" value="P:positive regulation of MAPK cascade"/>
    <property type="evidence" value="ECO:0000314"/>
    <property type="project" value="BHF-UCL"/>
</dbReference>
<dbReference type="GO" id="GO:1904635">
    <property type="term" value="P:positive regulation of podocyte apoptotic process"/>
    <property type="evidence" value="ECO:0000250"/>
    <property type="project" value="UniProtKB"/>
</dbReference>
<dbReference type="GO" id="GO:0045944">
    <property type="term" value="P:positive regulation of transcription by RNA polymerase II"/>
    <property type="evidence" value="ECO:0000314"/>
    <property type="project" value="BHF-UCL"/>
</dbReference>
<dbReference type="GO" id="GO:0046324">
    <property type="term" value="P:regulation of D-glucose import"/>
    <property type="evidence" value="ECO:0000314"/>
    <property type="project" value="BHF-UCL"/>
</dbReference>
<dbReference type="CDD" id="cd00125">
    <property type="entry name" value="PLA2c"/>
    <property type="match status" value="1"/>
</dbReference>
<dbReference type="FunFam" id="1.20.90.10:FF:000011">
    <property type="entry name" value="Phospholipase A(2)"/>
    <property type="match status" value="1"/>
</dbReference>
<dbReference type="Gene3D" id="1.20.90.10">
    <property type="entry name" value="Phospholipase A2 domain"/>
    <property type="match status" value="1"/>
</dbReference>
<dbReference type="InterPro" id="IPR001211">
    <property type="entry name" value="PLipase_A2"/>
</dbReference>
<dbReference type="InterPro" id="IPR033112">
    <property type="entry name" value="PLipase_A2_Asp_AS"/>
</dbReference>
<dbReference type="InterPro" id="IPR016090">
    <property type="entry name" value="PLipase_A2_dom"/>
</dbReference>
<dbReference type="InterPro" id="IPR036444">
    <property type="entry name" value="PLipase_A2_dom_sf"/>
</dbReference>
<dbReference type="InterPro" id="IPR033113">
    <property type="entry name" value="PLipase_A2_His_AS"/>
</dbReference>
<dbReference type="PANTHER" id="PTHR11716:SF94">
    <property type="entry name" value="PHOSPHOLIPASE A2"/>
    <property type="match status" value="1"/>
</dbReference>
<dbReference type="PANTHER" id="PTHR11716">
    <property type="entry name" value="PHOSPHOLIPASE A2 FAMILY MEMBER"/>
    <property type="match status" value="1"/>
</dbReference>
<dbReference type="Pfam" id="PF00068">
    <property type="entry name" value="Phospholip_A2_1"/>
    <property type="match status" value="1"/>
</dbReference>
<dbReference type="PRINTS" id="PR00389">
    <property type="entry name" value="PHPHLIPASEA2"/>
</dbReference>
<dbReference type="SMART" id="SM00085">
    <property type="entry name" value="PA2c"/>
    <property type="match status" value="1"/>
</dbReference>
<dbReference type="SUPFAM" id="SSF48619">
    <property type="entry name" value="Phospholipase A2, PLA2"/>
    <property type="match status" value="1"/>
</dbReference>
<dbReference type="PROSITE" id="PS00119">
    <property type="entry name" value="PA2_ASP"/>
    <property type="match status" value="1"/>
</dbReference>
<dbReference type="PROSITE" id="PS00118">
    <property type="entry name" value="PA2_HIS"/>
    <property type="match status" value="1"/>
</dbReference>
<evidence type="ECO:0000250" key="1">
    <source>
        <dbReference type="UniProtKB" id="P00593"/>
    </source>
</evidence>
<evidence type="ECO:0000250" key="2">
    <source>
        <dbReference type="UniProtKB" id="P04054"/>
    </source>
</evidence>
<evidence type="ECO:0000250" key="3">
    <source>
        <dbReference type="UniProtKB" id="P04055"/>
    </source>
</evidence>
<evidence type="ECO:0000250" key="4">
    <source>
        <dbReference type="UniProtKB" id="Q9Z0Y2"/>
    </source>
</evidence>
<evidence type="ECO:0000255" key="5">
    <source>
        <dbReference type="PROSITE-ProRule" id="PRU10035"/>
    </source>
</evidence>
<evidence type="ECO:0000255" key="6">
    <source>
        <dbReference type="PROSITE-ProRule" id="PRU10036"/>
    </source>
</evidence>
<evidence type="ECO:0000269" key="7">
    <source>
    </source>
</evidence>
<evidence type="ECO:0000269" key="8">
    <source>
    </source>
</evidence>
<evidence type="ECO:0000269" key="9">
    <source>
    </source>
</evidence>
<evidence type="ECO:0000269" key="10">
    <source>
    </source>
</evidence>
<evidence type="ECO:0000269" key="11">
    <source>
    </source>
</evidence>
<evidence type="ECO:0000305" key="12"/>
<evidence type="ECO:0007829" key="13">
    <source>
        <dbReference type="PDB" id="1FXF"/>
    </source>
</evidence>
<evidence type="ECO:0007829" key="14">
    <source>
        <dbReference type="PDB" id="1HN4"/>
    </source>
</evidence>
<evidence type="ECO:0007829" key="15">
    <source>
        <dbReference type="PDB" id="1P2P"/>
    </source>
</evidence>
<evidence type="ECO:0007829" key="16">
    <source>
        <dbReference type="PDB" id="3O4M"/>
    </source>
</evidence>
<name>PA21B_PIG</name>
<proteinExistence type="evidence at protein level"/>
<comment type="function">
    <text evidence="2 3 4 7">Secretory calcium-dependent phospholipase A2 that primarily targets dietary phospholipids in the intestinal tract (PubMed:17603006). Hydrolyzes the ester bond of the fatty acyl group attached at sn-2 position of phospholipids (phospholipase A2 activity) with preference for phosphatidylethanolamines and phosphatidylglycerols over phosphatidylcholines (By similarity). May play a role in the biosynthesis of N-acyl ethanolamines that regulate energy metabolism and inflammation in the intestinal tract. Hydrolyzes N-acyl phosphatidylethanolamines to N-acyl lysophosphatidylethanolamines, which are further cleaved by a lysophospholipase D to release N-acyl ethanolamines (By similarity). May act in an autocrine and paracrine manner (By similarity). Has anti-helminth activity in a process regulated by gut microbiota. Upon helminth infection of intestinal epithelia, directly affects phosphatidylethanolamine contents in the membrane of helminth larvae, likely controlling an array of phospholipid-mediated cellular processes such as membrane fusion and cell division while providing for better immune recognition, ultimately reducing larvae integrity and infectivity (By similarity).</text>
</comment>
<comment type="catalytic activity">
    <reaction evidence="5 6 7">
        <text>a 1,2-diacyl-sn-glycero-3-phosphocholine + H2O = a 1-acyl-sn-glycero-3-phosphocholine + a fatty acid + H(+)</text>
        <dbReference type="Rhea" id="RHEA:15801"/>
        <dbReference type="ChEBI" id="CHEBI:15377"/>
        <dbReference type="ChEBI" id="CHEBI:15378"/>
        <dbReference type="ChEBI" id="CHEBI:28868"/>
        <dbReference type="ChEBI" id="CHEBI:57643"/>
        <dbReference type="ChEBI" id="CHEBI:58168"/>
        <dbReference type="EC" id="3.1.1.4"/>
    </reaction>
</comment>
<comment type="catalytic activity">
    <reaction evidence="7">
        <text>1,2-ditetradecanoyl-sn-glycero-3-phosphocholine + H2O = 2-tetradecanoyl-sn-glycero-3-phosphocholine + tetradecanoate + H(+)</text>
        <dbReference type="Rhea" id="RHEA:54404"/>
        <dbReference type="ChEBI" id="CHEBI:15377"/>
        <dbReference type="ChEBI" id="CHEBI:15378"/>
        <dbReference type="ChEBI" id="CHEBI:30807"/>
        <dbReference type="ChEBI" id="CHEBI:45240"/>
        <dbReference type="ChEBI" id="CHEBI:131738"/>
    </reaction>
</comment>
<comment type="catalytic activity">
    <reaction evidence="3">
        <text>1,2-dihexadecanoyl-sn-glycero-3-phosphocholine + H2O = 1-hexadecanoyl-sn-glycero-3-phosphocholine + hexadecanoate + H(+)</text>
        <dbReference type="Rhea" id="RHEA:41223"/>
        <dbReference type="ChEBI" id="CHEBI:7896"/>
        <dbReference type="ChEBI" id="CHEBI:15377"/>
        <dbReference type="ChEBI" id="CHEBI:15378"/>
        <dbReference type="ChEBI" id="CHEBI:72998"/>
        <dbReference type="ChEBI" id="CHEBI:72999"/>
    </reaction>
    <physiologicalReaction direction="left-to-right" evidence="3">
        <dbReference type="Rhea" id="RHEA:41224"/>
    </physiologicalReaction>
</comment>
<comment type="catalytic activity">
    <reaction evidence="2">
        <text>1-hexadecanoyl-2-(9Z-octadecenoyl)-sn-glycero-3-phosphocholine + H2O = 1-hexadecanoyl-sn-glycero-3-phosphocholine + (9Z)-octadecenoate + H(+)</text>
        <dbReference type="Rhea" id="RHEA:38779"/>
        <dbReference type="ChEBI" id="CHEBI:15377"/>
        <dbReference type="ChEBI" id="CHEBI:15378"/>
        <dbReference type="ChEBI" id="CHEBI:30823"/>
        <dbReference type="ChEBI" id="CHEBI:72998"/>
        <dbReference type="ChEBI" id="CHEBI:73001"/>
    </reaction>
    <physiologicalReaction direction="left-to-right" evidence="2">
        <dbReference type="Rhea" id="RHEA:38780"/>
    </physiologicalReaction>
</comment>
<comment type="catalytic activity">
    <reaction evidence="3">
        <text>1-hexadecanoyl-2-(5Z,8Z,11Z,14Z-eicosatetraenoyl)-sn-glycero-3-phosphocholine + H2O = 1-hexadecanoyl-sn-glycero-3-phosphocholine + (5Z,8Z,11Z,14Z)-eicosatetraenoate + H(+)</text>
        <dbReference type="Rhea" id="RHEA:40427"/>
        <dbReference type="ChEBI" id="CHEBI:15377"/>
        <dbReference type="ChEBI" id="CHEBI:15378"/>
        <dbReference type="ChEBI" id="CHEBI:32395"/>
        <dbReference type="ChEBI" id="CHEBI:72998"/>
        <dbReference type="ChEBI" id="CHEBI:73003"/>
    </reaction>
    <physiologicalReaction direction="left-to-right" evidence="3">
        <dbReference type="Rhea" id="RHEA:40428"/>
    </physiologicalReaction>
</comment>
<comment type="catalytic activity">
    <reaction evidence="2">
        <text>1-hexadecanoyl-2-(9Z-octadecenoyl)-sn-glycero-3-phospho-(1'-sn-glycerol) + H2O = 1-hexadecanoyl-sn-glycero-3-phospho-(1'-sn-glycerol) + (9Z)-octadecenoate + H(+)</text>
        <dbReference type="Rhea" id="RHEA:40919"/>
        <dbReference type="ChEBI" id="CHEBI:15377"/>
        <dbReference type="ChEBI" id="CHEBI:15378"/>
        <dbReference type="ChEBI" id="CHEBI:30823"/>
        <dbReference type="ChEBI" id="CHEBI:72841"/>
        <dbReference type="ChEBI" id="CHEBI:75158"/>
    </reaction>
    <physiologicalReaction direction="left-to-right" evidence="2">
        <dbReference type="Rhea" id="RHEA:40920"/>
    </physiologicalReaction>
</comment>
<comment type="catalytic activity">
    <reaction evidence="3">
        <text>N-hexadecanoyl-1,2-di-(9Z-octadecenoyl)-sn-glycero-3-phosphoethanolamine + H2O = N-hexadecanoyl-1-(9Z-octadecenoyl)-sn-glycero-3-phosphoethanolamine + (9Z)-octadecenoate + H(+)</text>
        <dbReference type="Rhea" id="RHEA:45424"/>
        <dbReference type="ChEBI" id="CHEBI:15377"/>
        <dbReference type="ChEBI" id="CHEBI:15378"/>
        <dbReference type="ChEBI" id="CHEBI:30823"/>
        <dbReference type="ChEBI" id="CHEBI:78097"/>
        <dbReference type="ChEBI" id="CHEBI:85217"/>
    </reaction>
    <physiologicalReaction direction="left-to-right" evidence="3">
        <dbReference type="Rhea" id="RHEA:45425"/>
    </physiologicalReaction>
</comment>
<comment type="catalytic activity">
    <reaction evidence="3">
        <text>1-hexadecanoyl-2-(9Z,12Z-octadecadienoyl)-sn-glycero-3-phosphoethanolamine + H2O = 1-hexadecanoyl-sn-glycero-3-phosphoethanolamine + (9Z,12Z)-octadecadienoate + H(+)</text>
        <dbReference type="Rhea" id="RHEA:40815"/>
        <dbReference type="ChEBI" id="CHEBI:15377"/>
        <dbReference type="ChEBI" id="CHEBI:15378"/>
        <dbReference type="ChEBI" id="CHEBI:30245"/>
        <dbReference type="ChEBI" id="CHEBI:73004"/>
        <dbReference type="ChEBI" id="CHEBI:73008"/>
    </reaction>
    <physiologicalReaction direction="left-to-right" evidence="3">
        <dbReference type="Rhea" id="RHEA:40816"/>
    </physiologicalReaction>
</comment>
<comment type="catalytic activity">
    <reaction evidence="3">
        <text>N,1-dihexadecanoyl-2-(9Z,12Z-octadecadienoyl)-sn-glycero-3-phosphoethanolamine + H2O = N,1-dihexadecanoyl-sn-glycero-3-phosphoethanolamine + (9Z,12Z)-octadecadienoate + H(+)</text>
        <dbReference type="Rhea" id="RHEA:56424"/>
        <dbReference type="ChEBI" id="CHEBI:15377"/>
        <dbReference type="ChEBI" id="CHEBI:15378"/>
        <dbReference type="ChEBI" id="CHEBI:30245"/>
        <dbReference type="ChEBI" id="CHEBI:85334"/>
        <dbReference type="ChEBI" id="CHEBI:85335"/>
    </reaction>
    <physiologicalReaction direction="left-to-right" evidence="3">
        <dbReference type="Rhea" id="RHEA:56425"/>
    </physiologicalReaction>
</comment>
<comment type="cofactor">
    <cofactor evidence="1">
        <name>Ca(2+)</name>
        <dbReference type="ChEBI" id="CHEBI:29108"/>
    </cofactor>
    <text evidence="1">Binds 1 Ca(2+) ion per subunit.</text>
</comment>
<comment type="activity regulation">
    <text evidence="7">Regulated by bile acid salts. Up-regulated by cholate and down-regulated by taurochenodeoxycholate.</text>
</comment>
<comment type="subunit">
    <text evidence="8">Monomer or homodimer.</text>
</comment>
<comment type="subcellular location">
    <subcellularLocation>
        <location evidence="2">Secreted</location>
    </subcellularLocation>
    <text evidence="2">Secreted from pancreatic acinar cells in its inactive form.</text>
</comment>
<comment type="PTM">
    <text evidence="8">Acylation causes dimerization.</text>
</comment>
<comment type="PTM">
    <text evidence="2">Activated by trypsin cleavage in the duodenum. Can also be activated by thrombin or autocatalytically.</text>
</comment>
<comment type="miscellaneous">
    <text>Loss of activity upon alkylation of His-70 with p-bromo phenacyl bromide; Ca(2+) and Ba(2+) protect against inactivation.</text>
</comment>
<comment type="similarity">
    <text evidence="12">Belongs to the phospholipase A2 family.</text>
</comment>
<keyword id="KW-0002">3D-structure</keyword>
<keyword id="KW-0068">Autocatalytic cleavage</keyword>
<keyword id="KW-0106">Calcium</keyword>
<keyword id="KW-0903">Direct protein sequencing</keyword>
<keyword id="KW-1015">Disulfide bond</keyword>
<keyword id="KW-0378">Hydrolase</keyword>
<keyword id="KW-0443">Lipid metabolism</keyword>
<keyword id="KW-0449">Lipoprotein</keyword>
<keyword id="KW-0479">Metal-binding</keyword>
<keyword id="KW-0564">Palmitate</keyword>
<keyword id="KW-1208">Phospholipid metabolism</keyword>
<keyword id="KW-0873">Pyrrolidone carboxylic acid</keyword>
<keyword id="KW-1185">Reference proteome</keyword>
<keyword id="KW-0964">Secreted</keyword>
<keyword id="KW-0732">Signal</keyword>
<keyword id="KW-0865">Zymogen</keyword>
<accession>P00592</accession>